<protein>
    <recommendedName>
        <fullName>Glutamate decarboxylase beta</fullName>
        <shortName>GAD-beta</shortName>
        <ecNumber>4.1.1.15</ecNumber>
    </recommendedName>
</protein>
<feature type="chain" id="PRO_0000146984" description="Glutamate decarboxylase beta">
    <location>
        <begin position="1"/>
        <end position="466"/>
    </location>
</feature>
<feature type="binding site" evidence="1">
    <location>
        <position position="62"/>
    </location>
    <ligand>
        <name>substrate</name>
    </ligand>
</feature>
<feature type="binding site" evidence="1">
    <location>
        <position position="83"/>
    </location>
    <ligand>
        <name>substrate</name>
    </ligand>
</feature>
<feature type="binding site" evidence="1">
    <location>
        <begin position="126"/>
        <end position="127"/>
    </location>
    <ligand>
        <name>pyridoxal 5'-phosphate</name>
        <dbReference type="ChEBI" id="CHEBI:597326"/>
    </ligand>
</feature>
<feature type="binding site" evidence="1">
    <location>
        <position position="212"/>
    </location>
    <ligand>
        <name>pyridoxal 5'-phosphate</name>
        <dbReference type="ChEBI" id="CHEBI:597326"/>
    </ligand>
</feature>
<feature type="binding site" evidence="1">
    <location>
        <position position="275"/>
    </location>
    <ligand>
        <name>pyridoxal 5'-phosphate</name>
        <dbReference type="ChEBI" id="CHEBI:597326"/>
    </ligand>
</feature>
<feature type="modified residue" description="N6-(pyridoxal phosphate)lysine" evidence="1">
    <location>
        <position position="276"/>
    </location>
</feature>
<feature type="modified residue" description="N6-acetyllysine" evidence="1">
    <location>
        <position position="446"/>
    </location>
</feature>
<feature type="modified residue" description="N6-acetyllysine" evidence="1">
    <location>
        <position position="453"/>
    </location>
</feature>
<feature type="modified residue" description="N6-acetyllysine" evidence="1">
    <location>
        <position position="464"/>
    </location>
</feature>
<name>DCEB_ECO57</name>
<evidence type="ECO:0000250" key="1"/>
<evidence type="ECO:0000305" key="2"/>
<proteinExistence type="inferred from homology"/>
<gene>
    <name type="primary">gadB</name>
    <name type="ordered locus">Z2215</name>
    <name type="ordered locus">ECs2098</name>
</gene>
<organism>
    <name type="scientific">Escherichia coli O157:H7</name>
    <dbReference type="NCBI Taxonomy" id="83334"/>
    <lineage>
        <taxon>Bacteria</taxon>
        <taxon>Pseudomonadati</taxon>
        <taxon>Pseudomonadota</taxon>
        <taxon>Gammaproteobacteria</taxon>
        <taxon>Enterobacterales</taxon>
        <taxon>Enterobacteriaceae</taxon>
        <taxon>Escherichia</taxon>
    </lineage>
</organism>
<dbReference type="EC" id="4.1.1.15"/>
<dbReference type="EMBL" id="AE005174">
    <property type="protein sequence ID" value="AAG56275.1"/>
    <property type="molecule type" value="Genomic_DNA"/>
</dbReference>
<dbReference type="EMBL" id="BA000007">
    <property type="protein sequence ID" value="BAB35521.1"/>
    <property type="molecule type" value="Genomic_DNA"/>
</dbReference>
<dbReference type="PIR" id="B90891">
    <property type="entry name" value="B90891"/>
</dbReference>
<dbReference type="PIR" id="G85726">
    <property type="entry name" value="G85726"/>
</dbReference>
<dbReference type="RefSeq" id="WP_000358930.1">
    <property type="nucleotide sequence ID" value="NZ_SWKA01000005.1"/>
</dbReference>
<dbReference type="SMR" id="P69911"/>
<dbReference type="STRING" id="155864.Z2215"/>
<dbReference type="KEGG" id="ece:Z2215"/>
<dbReference type="KEGG" id="ecs:ECs_2098"/>
<dbReference type="PATRIC" id="fig|386585.9.peg.2203"/>
<dbReference type="eggNOG" id="COG0076">
    <property type="taxonomic scope" value="Bacteria"/>
</dbReference>
<dbReference type="HOGENOM" id="CLU_019582_0_0_6"/>
<dbReference type="OMA" id="ECRDKNM"/>
<dbReference type="Proteomes" id="UP000000558">
    <property type="component" value="Chromosome"/>
</dbReference>
<dbReference type="Proteomes" id="UP000002519">
    <property type="component" value="Chromosome"/>
</dbReference>
<dbReference type="GO" id="GO:0005829">
    <property type="term" value="C:cytosol"/>
    <property type="evidence" value="ECO:0007669"/>
    <property type="project" value="TreeGrafter"/>
</dbReference>
<dbReference type="GO" id="GO:0004351">
    <property type="term" value="F:glutamate decarboxylase activity"/>
    <property type="evidence" value="ECO:0007669"/>
    <property type="project" value="UniProtKB-EC"/>
</dbReference>
<dbReference type="GO" id="GO:0030170">
    <property type="term" value="F:pyridoxal phosphate binding"/>
    <property type="evidence" value="ECO:0007669"/>
    <property type="project" value="InterPro"/>
</dbReference>
<dbReference type="GO" id="GO:0006538">
    <property type="term" value="P:glutamate catabolic process"/>
    <property type="evidence" value="ECO:0007669"/>
    <property type="project" value="TreeGrafter"/>
</dbReference>
<dbReference type="CDD" id="cd06450">
    <property type="entry name" value="DOPA_deC_like"/>
    <property type="match status" value="1"/>
</dbReference>
<dbReference type="FunFam" id="3.40.640.10:FF:000017">
    <property type="entry name" value="Glutamate decarboxylase"/>
    <property type="match status" value="1"/>
</dbReference>
<dbReference type="FunFam" id="3.90.1150.160:FF:000002">
    <property type="entry name" value="Glutamate decarboxylase"/>
    <property type="match status" value="1"/>
</dbReference>
<dbReference type="FunFam" id="4.10.280.50:FF:000001">
    <property type="entry name" value="Glutamate decarboxylase"/>
    <property type="match status" value="1"/>
</dbReference>
<dbReference type="Gene3D" id="3.90.1150.160">
    <property type="match status" value="1"/>
</dbReference>
<dbReference type="Gene3D" id="4.10.280.50">
    <property type="match status" value="1"/>
</dbReference>
<dbReference type="Gene3D" id="3.40.640.10">
    <property type="entry name" value="Type I PLP-dependent aspartate aminotransferase-like (Major domain)"/>
    <property type="match status" value="1"/>
</dbReference>
<dbReference type="InterPro" id="IPR010107">
    <property type="entry name" value="Glutamate_decarboxylase"/>
</dbReference>
<dbReference type="InterPro" id="IPR002129">
    <property type="entry name" value="PyrdxlP-dep_de-COase"/>
</dbReference>
<dbReference type="InterPro" id="IPR015424">
    <property type="entry name" value="PyrdxlP-dep_Trfase"/>
</dbReference>
<dbReference type="InterPro" id="IPR015421">
    <property type="entry name" value="PyrdxlP-dep_Trfase_major"/>
</dbReference>
<dbReference type="InterPro" id="IPR021115">
    <property type="entry name" value="Pyridoxal-P_BS"/>
</dbReference>
<dbReference type="NCBIfam" id="TIGR01788">
    <property type="entry name" value="Glu-decarb-GAD"/>
    <property type="match status" value="1"/>
</dbReference>
<dbReference type="PANTHER" id="PTHR43321">
    <property type="entry name" value="GLUTAMATE DECARBOXYLASE"/>
    <property type="match status" value="1"/>
</dbReference>
<dbReference type="PANTHER" id="PTHR43321:SF3">
    <property type="entry name" value="GLUTAMATE DECARBOXYLASE"/>
    <property type="match status" value="1"/>
</dbReference>
<dbReference type="Pfam" id="PF00282">
    <property type="entry name" value="Pyridoxal_deC"/>
    <property type="match status" value="1"/>
</dbReference>
<dbReference type="SUPFAM" id="SSF53383">
    <property type="entry name" value="PLP-dependent transferases"/>
    <property type="match status" value="1"/>
</dbReference>
<dbReference type="PROSITE" id="PS00392">
    <property type="entry name" value="DDC_GAD_HDC_YDC"/>
    <property type="match status" value="1"/>
</dbReference>
<reference key="1">
    <citation type="journal article" date="2001" name="Nature">
        <title>Genome sequence of enterohaemorrhagic Escherichia coli O157:H7.</title>
        <authorList>
            <person name="Perna N.T."/>
            <person name="Plunkett G. III"/>
            <person name="Burland V."/>
            <person name="Mau B."/>
            <person name="Glasner J.D."/>
            <person name="Rose D.J."/>
            <person name="Mayhew G.F."/>
            <person name="Evans P.S."/>
            <person name="Gregor J."/>
            <person name="Kirkpatrick H.A."/>
            <person name="Posfai G."/>
            <person name="Hackett J."/>
            <person name="Klink S."/>
            <person name="Boutin A."/>
            <person name="Shao Y."/>
            <person name="Miller L."/>
            <person name="Grotbeck E.J."/>
            <person name="Davis N.W."/>
            <person name="Lim A."/>
            <person name="Dimalanta E.T."/>
            <person name="Potamousis K."/>
            <person name="Apodaca J."/>
            <person name="Anantharaman T.S."/>
            <person name="Lin J."/>
            <person name="Yen G."/>
            <person name="Schwartz D.C."/>
            <person name="Welch R.A."/>
            <person name="Blattner F.R."/>
        </authorList>
    </citation>
    <scope>NUCLEOTIDE SEQUENCE [LARGE SCALE GENOMIC DNA]</scope>
    <source>
        <strain>O157:H7 / EDL933 / ATCC 700927 / EHEC</strain>
    </source>
</reference>
<reference key="2">
    <citation type="journal article" date="2001" name="DNA Res.">
        <title>Complete genome sequence of enterohemorrhagic Escherichia coli O157:H7 and genomic comparison with a laboratory strain K-12.</title>
        <authorList>
            <person name="Hayashi T."/>
            <person name="Makino K."/>
            <person name="Ohnishi M."/>
            <person name="Kurokawa K."/>
            <person name="Ishii K."/>
            <person name="Yokoyama K."/>
            <person name="Han C.-G."/>
            <person name="Ohtsubo E."/>
            <person name="Nakayama K."/>
            <person name="Murata T."/>
            <person name="Tanaka M."/>
            <person name="Tobe T."/>
            <person name="Iida T."/>
            <person name="Takami H."/>
            <person name="Honda T."/>
            <person name="Sasakawa C."/>
            <person name="Ogasawara N."/>
            <person name="Yasunaga T."/>
            <person name="Kuhara S."/>
            <person name="Shiba T."/>
            <person name="Hattori M."/>
            <person name="Shinagawa H."/>
        </authorList>
    </citation>
    <scope>NUCLEOTIDE SEQUENCE [LARGE SCALE GENOMIC DNA]</scope>
    <source>
        <strain>O157:H7 / Sakai / RIMD 0509952 / EHEC</strain>
    </source>
</reference>
<comment type="function">
    <text evidence="1">Converts glutamate to gamma-aminobutyrate (GABA), consuming one intracellular proton in the reaction. The gad system helps to maintain a near-neutral intracellular pH when cells are exposed to extremely acidic conditions. The ability to survive transit through the acidic conditions of the stomach is essential for successful colonization of the mammalian host by commensal and pathogenic bacteria (By similarity).</text>
</comment>
<comment type="catalytic activity">
    <reaction>
        <text>L-glutamate + H(+) = 4-aminobutanoate + CO2</text>
        <dbReference type="Rhea" id="RHEA:17785"/>
        <dbReference type="ChEBI" id="CHEBI:15378"/>
        <dbReference type="ChEBI" id="CHEBI:16526"/>
        <dbReference type="ChEBI" id="CHEBI:29985"/>
        <dbReference type="ChEBI" id="CHEBI:59888"/>
        <dbReference type="EC" id="4.1.1.15"/>
    </reaction>
</comment>
<comment type="cofactor">
    <cofactor evidence="1">
        <name>pyridoxal 5'-phosphate</name>
        <dbReference type="ChEBI" id="CHEBI:597326"/>
    </cofactor>
</comment>
<comment type="subunit">
    <text evidence="1">Homohexamer composed of three dimers.</text>
</comment>
<comment type="induction">
    <text evidence="1">By acidic conditions. Expression is regulated by a complex system involving RpoS, cAMP, CRP, EvgAS, H-NS, GadE, GadW and GadX. The level of involvement for each regulator varies depending upon the growth phase and the medium (By similarity).</text>
</comment>
<comment type="similarity">
    <text evidence="2">Belongs to the group II decarboxylase family.</text>
</comment>
<keyword id="KW-0007">Acetylation</keyword>
<keyword id="KW-0210">Decarboxylase</keyword>
<keyword id="KW-0456">Lyase</keyword>
<keyword id="KW-0663">Pyridoxal phosphate</keyword>
<keyword id="KW-1185">Reference proteome</keyword>
<sequence>MDKKQVTDLRSELLDSRFGAKSISTIAESKRFPLHEMRDDVAFQIINDELYLDGNARQNLATFCQTWDDENVHKLMDLSINKNWIDKEEYPQSAAIDLRCVNMVADLWHAPAPKNGQAVGTNTIGSSEACMLGGMAMKWRWRKRMEAAGKPTDKPNLVCGPVQICWHKFARYWDVELREIPMRPGQLFMDPKRMIEACDENTIGVVPTFGVTYTGNYEFPQPLHDALDKFQADTGIDIDMHIDAASGGFLAPFVAPDIVWDFRLPRVKSISASGHKFGLAPLGCGWVIWRDEEALPQELVFNVDYLGGQIGTFAINFSRPAGQVIAQYYEFLRLGREGYTKVQNASYQVAAYLADEIAKLGPYEFICTGRPDEGIPAVCFKLKDGEDPGYTLYDLSERLRLRGWQVPAFTLGGEATDIVVMRIMCRRGFEMDFAELLLEDYKASLKYLSDHPKLQGIAQQNSFKHT</sequence>
<accession>P69911</accession>
<accession>P28302</accession>
<accession>P76873</accession>